<proteinExistence type="inferred from homology"/>
<accession>Q5GW16</accession>
<reference key="1">
    <citation type="journal article" date="2005" name="Nucleic Acids Res.">
        <title>The genome sequence of Xanthomonas oryzae pathovar oryzae KACC10331, the bacterial blight pathogen of rice.</title>
        <authorList>
            <person name="Lee B.-M."/>
            <person name="Park Y.-J."/>
            <person name="Park D.-S."/>
            <person name="Kang H.-W."/>
            <person name="Kim J.-G."/>
            <person name="Song E.-S."/>
            <person name="Park I.-C."/>
            <person name="Yoon U.-H."/>
            <person name="Hahn J.-H."/>
            <person name="Koo B.-S."/>
            <person name="Lee G.-B."/>
            <person name="Kim H."/>
            <person name="Park H.-S."/>
            <person name="Yoon K.-O."/>
            <person name="Kim J.-H."/>
            <person name="Jung C.-H."/>
            <person name="Koh N.-H."/>
            <person name="Seo J.-S."/>
            <person name="Go S.-J."/>
        </authorList>
    </citation>
    <scope>NUCLEOTIDE SEQUENCE [LARGE SCALE GENOMIC DNA]</scope>
    <source>
        <strain>KACC10331 / KXO85</strain>
    </source>
</reference>
<feature type="chain" id="PRO_0000265627" description="Transcription antitermination protein NusB">
    <location>
        <begin position="1"/>
        <end position="156"/>
    </location>
</feature>
<gene>
    <name evidence="1" type="primary">nusB</name>
    <name type="ordered locus">XOO3851</name>
</gene>
<name>NUSB_XANOR</name>
<organism>
    <name type="scientific">Xanthomonas oryzae pv. oryzae (strain KACC10331 / KXO85)</name>
    <dbReference type="NCBI Taxonomy" id="291331"/>
    <lineage>
        <taxon>Bacteria</taxon>
        <taxon>Pseudomonadati</taxon>
        <taxon>Pseudomonadota</taxon>
        <taxon>Gammaproteobacteria</taxon>
        <taxon>Lysobacterales</taxon>
        <taxon>Lysobacteraceae</taxon>
        <taxon>Xanthomonas</taxon>
    </lineage>
</organism>
<keyword id="KW-1185">Reference proteome</keyword>
<keyword id="KW-0694">RNA-binding</keyword>
<keyword id="KW-0804">Transcription</keyword>
<keyword id="KW-0889">Transcription antitermination</keyword>
<keyword id="KW-0805">Transcription regulation</keyword>
<comment type="function">
    <text evidence="1">Involved in transcription antitermination. Required for transcription of ribosomal RNA (rRNA) genes. Binds specifically to the boxA antiterminator sequence of the ribosomal RNA (rrn) operons.</text>
</comment>
<comment type="similarity">
    <text evidence="1">Belongs to the NusB family.</text>
</comment>
<sequence>MSKPGGHPRHGRRDGIDPVLRSRARRRALQAVYAWQISGGFAKQVIAQFAHEQAHEVADLAYFENLVEGVLTNRAELDTALTPYLDRGVEEVDAIERAVLRLAAYELLYRQDVPYRVVINEAIETAKRFGSEHGHTYVNGVLDRAAVEWRKVESGA</sequence>
<evidence type="ECO:0000255" key="1">
    <source>
        <dbReference type="HAMAP-Rule" id="MF_00073"/>
    </source>
</evidence>
<dbReference type="EMBL" id="AE013598">
    <property type="protein sequence ID" value="AAW77105.1"/>
    <property type="molecule type" value="Genomic_DNA"/>
</dbReference>
<dbReference type="SMR" id="Q5GW16"/>
<dbReference type="STRING" id="291331.XOO3851"/>
<dbReference type="KEGG" id="xoo:XOO3851"/>
<dbReference type="HOGENOM" id="CLU_087843_4_1_6"/>
<dbReference type="Proteomes" id="UP000006735">
    <property type="component" value="Chromosome"/>
</dbReference>
<dbReference type="GO" id="GO:0005829">
    <property type="term" value="C:cytosol"/>
    <property type="evidence" value="ECO:0007669"/>
    <property type="project" value="TreeGrafter"/>
</dbReference>
<dbReference type="GO" id="GO:0003723">
    <property type="term" value="F:RNA binding"/>
    <property type="evidence" value="ECO:0007669"/>
    <property type="project" value="UniProtKB-UniRule"/>
</dbReference>
<dbReference type="GO" id="GO:0006353">
    <property type="term" value="P:DNA-templated transcription termination"/>
    <property type="evidence" value="ECO:0007669"/>
    <property type="project" value="UniProtKB-UniRule"/>
</dbReference>
<dbReference type="GO" id="GO:0031564">
    <property type="term" value="P:transcription antitermination"/>
    <property type="evidence" value="ECO:0007669"/>
    <property type="project" value="UniProtKB-KW"/>
</dbReference>
<dbReference type="FunFam" id="1.10.940.10:FF:000001">
    <property type="entry name" value="Transcription antitermination factor NusB"/>
    <property type="match status" value="1"/>
</dbReference>
<dbReference type="Gene3D" id="1.10.940.10">
    <property type="entry name" value="NusB-like"/>
    <property type="match status" value="1"/>
</dbReference>
<dbReference type="HAMAP" id="MF_00073">
    <property type="entry name" value="NusB"/>
    <property type="match status" value="1"/>
</dbReference>
<dbReference type="InterPro" id="IPR035926">
    <property type="entry name" value="NusB-like_sf"/>
</dbReference>
<dbReference type="InterPro" id="IPR011605">
    <property type="entry name" value="NusB_fam"/>
</dbReference>
<dbReference type="InterPro" id="IPR006027">
    <property type="entry name" value="NusB_RsmB_TIM44"/>
</dbReference>
<dbReference type="NCBIfam" id="TIGR01951">
    <property type="entry name" value="nusB"/>
    <property type="match status" value="1"/>
</dbReference>
<dbReference type="PANTHER" id="PTHR11078:SF3">
    <property type="entry name" value="ANTITERMINATION NUSB DOMAIN-CONTAINING PROTEIN"/>
    <property type="match status" value="1"/>
</dbReference>
<dbReference type="PANTHER" id="PTHR11078">
    <property type="entry name" value="N UTILIZATION SUBSTANCE PROTEIN B-RELATED"/>
    <property type="match status" value="1"/>
</dbReference>
<dbReference type="Pfam" id="PF01029">
    <property type="entry name" value="NusB"/>
    <property type="match status" value="1"/>
</dbReference>
<dbReference type="SUPFAM" id="SSF48013">
    <property type="entry name" value="NusB-like"/>
    <property type="match status" value="1"/>
</dbReference>
<protein>
    <recommendedName>
        <fullName evidence="1">Transcription antitermination protein NusB</fullName>
    </recommendedName>
    <alternativeName>
        <fullName evidence="1">Antitermination factor NusB</fullName>
    </alternativeName>
</protein>